<feature type="chain" id="PRO_0000386413" description="GTPase Obg">
    <location>
        <begin position="1"/>
        <end position="390"/>
    </location>
</feature>
<feature type="domain" description="Obg" evidence="2">
    <location>
        <begin position="1"/>
        <end position="159"/>
    </location>
</feature>
<feature type="domain" description="OBG-type G" evidence="1">
    <location>
        <begin position="160"/>
        <end position="333"/>
    </location>
</feature>
<feature type="region of interest" description="Disordered" evidence="3">
    <location>
        <begin position="364"/>
        <end position="390"/>
    </location>
</feature>
<feature type="compositionally biased region" description="Acidic residues" evidence="3">
    <location>
        <begin position="364"/>
        <end position="384"/>
    </location>
</feature>
<feature type="binding site" evidence="1">
    <location>
        <begin position="166"/>
        <end position="173"/>
    </location>
    <ligand>
        <name>GTP</name>
        <dbReference type="ChEBI" id="CHEBI:37565"/>
    </ligand>
</feature>
<feature type="binding site" evidence="1">
    <location>
        <position position="173"/>
    </location>
    <ligand>
        <name>Mg(2+)</name>
        <dbReference type="ChEBI" id="CHEBI:18420"/>
    </ligand>
</feature>
<feature type="binding site" evidence="1">
    <location>
        <begin position="191"/>
        <end position="195"/>
    </location>
    <ligand>
        <name>GTP</name>
        <dbReference type="ChEBI" id="CHEBI:37565"/>
    </ligand>
</feature>
<feature type="binding site" evidence="1">
    <location>
        <position position="193"/>
    </location>
    <ligand>
        <name>Mg(2+)</name>
        <dbReference type="ChEBI" id="CHEBI:18420"/>
    </ligand>
</feature>
<feature type="binding site" evidence="1">
    <location>
        <begin position="213"/>
        <end position="216"/>
    </location>
    <ligand>
        <name>GTP</name>
        <dbReference type="ChEBI" id="CHEBI:37565"/>
    </ligand>
</feature>
<feature type="binding site" evidence="1">
    <location>
        <begin position="283"/>
        <end position="286"/>
    </location>
    <ligand>
        <name>GTP</name>
        <dbReference type="ChEBI" id="CHEBI:37565"/>
    </ligand>
</feature>
<feature type="binding site" evidence="1">
    <location>
        <begin position="314"/>
        <end position="316"/>
    </location>
    <ligand>
        <name>GTP</name>
        <dbReference type="ChEBI" id="CHEBI:37565"/>
    </ligand>
</feature>
<protein>
    <recommendedName>
        <fullName evidence="1">GTPase Obg</fullName>
        <ecNumber evidence="1">3.6.5.-</ecNumber>
    </recommendedName>
    <alternativeName>
        <fullName evidence="1">GTP-binding protein Obg</fullName>
    </alternativeName>
</protein>
<proteinExistence type="inferred from homology"/>
<accession>A7FMT5</accession>
<sequence>MKFVDEAAILVVAGDGGNGCVSFRREKYIPNGGPDGGDGGDGGDIYLLADENLNTLIDYRFVKSFRAERGQNGQSRDCTGKRGKDITIKVPVGTRVLDQGTGEIVGDMVRHGQRLMVAKGGFHGLGNSRFKSSVNRAPRQKTMGTEGETRELMLELLLLADVGMLGLPNAGKSTFIRAVSAAKPKVADYPFTTLIPSLGVVRMDYEQSFVIADIPGLIEGASDGAGLGIRFLKHLERCRVLLHLVDLAPIDESDPAENAKVIVNELQQYSENLAEKPRWLVFNKIDLIDPEEAEKRAKAIVETLGWEGKYYMISAANRDNVNALCWDVMSFLNSQPKAMAIAESVPEKVEFMWDDYHREQLAEVEAEAEDDWDDDWDEEDDDGVEIIYER</sequence>
<gene>
    <name evidence="1" type="primary">obg</name>
    <name type="ordered locus">YpsIP31758_3609</name>
</gene>
<keyword id="KW-0963">Cytoplasm</keyword>
<keyword id="KW-0342">GTP-binding</keyword>
<keyword id="KW-0378">Hydrolase</keyword>
<keyword id="KW-0460">Magnesium</keyword>
<keyword id="KW-0479">Metal-binding</keyword>
<keyword id="KW-0547">Nucleotide-binding</keyword>
<dbReference type="EC" id="3.6.5.-" evidence="1"/>
<dbReference type="EMBL" id="CP000720">
    <property type="protein sequence ID" value="ABS46742.1"/>
    <property type="molecule type" value="Genomic_DNA"/>
</dbReference>
<dbReference type="SMR" id="A7FMT5"/>
<dbReference type="KEGG" id="ypi:YpsIP31758_3609"/>
<dbReference type="HOGENOM" id="CLU_011747_2_0_6"/>
<dbReference type="Proteomes" id="UP000002412">
    <property type="component" value="Chromosome"/>
</dbReference>
<dbReference type="GO" id="GO:0005737">
    <property type="term" value="C:cytoplasm"/>
    <property type="evidence" value="ECO:0007669"/>
    <property type="project" value="UniProtKB-SubCell"/>
</dbReference>
<dbReference type="GO" id="GO:0005525">
    <property type="term" value="F:GTP binding"/>
    <property type="evidence" value="ECO:0007669"/>
    <property type="project" value="UniProtKB-UniRule"/>
</dbReference>
<dbReference type="GO" id="GO:0003924">
    <property type="term" value="F:GTPase activity"/>
    <property type="evidence" value="ECO:0007669"/>
    <property type="project" value="UniProtKB-UniRule"/>
</dbReference>
<dbReference type="GO" id="GO:0000287">
    <property type="term" value="F:magnesium ion binding"/>
    <property type="evidence" value="ECO:0007669"/>
    <property type="project" value="InterPro"/>
</dbReference>
<dbReference type="GO" id="GO:0042254">
    <property type="term" value="P:ribosome biogenesis"/>
    <property type="evidence" value="ECO:0007669"/>
    <property type="project" value="UniProtKB-UniRule"/>
</dbReference>
<dbReference type="CDD" id="cd01898">
    <property type="entry name" value="Obg"/>
    <property type="match status" value="1"/>
</dbReference>
<dbReference type="FunFam" id="2.70.210.12:FF:000001">
    <property type="entry name" value="GTPase Obg"/>
    <property type="match status" value="1"/>
</dbReference>
<dbReference type="FunFam" id="3.40.50.300:FF:000185">
    <property type="entry name" value="GTPase Obg"/>
    <property type="match status" value="1"/>
</dbReference>
<dbReference type="Gene3D" id="2.70.210.12">
    <property type="entry name" value="GTP1/OBG domain"/>
    <property type="match status" value="1"/>
</dbReference>
<dbReference type="Gene3D" id="3.40.50.300">
    <property type="entry name" value="P-loop containing nucleotide triphosphate hydrolases"/>
    <property type="match status" value="1"/>
</dbReference>
<dbReference type="HAMAP" id="MF_01454">
    <property type="entry name" value="GTPase_Obg"/>
    <property type="match status" value="1"/>
</dbReference>
<dbReference type="InterPro" id="IPR031167">
    <property type="entry name" value="G_OBG"/>
</dbReference>
<dbReference type="InterPro" id="IPR006073">
    <property type="entry name" value="GTP-bd"/>
</dbReference>
<dbReference type="InterPro" id="IPR014100">
    <property type="entry name" value="GTP-bd_Obg/CgtA"/>
</dbReference>
<dbReference type="InterPro" id="IPR006074">
    <property type="entry name" value="GTP1-OBG_CS"/>
</dbReference>
<dbReference type="InterPro" id="IPR006169">
    <property type="entry name" value="GTP1_OBG_dom"/>
</dbReference>
<dbReference type="InterPro" id="IPR036726">
    <property type="entry name" value="GTP1_OBG_dom_sf"/>
</dbReference>
<dbReference type="InterPro" id="IPR045086">
    <property type="entry name" value="OBG_GTPase"/>
</dbReference>
<dbReference type="InterPro" id="IPR027417">
    <property type="entry name" value="P-loop_NTPase"/>
</dbReference>
<dbReference type="NCBIfam" id="TIGR02729">
    <property type="entry name" value="Obg_CgtA"/>
    <property type="match status" value="1"/>
</dbReference>
<dbReference type="NCBIfam" id="NF008955">
    <property type="entry name" value="PRK12297.1"/>
    <property type="match status" value="1"/>
</dbReference>
<dbReference type="NCBIfam" id="NF008956">
    <property type="entry name" value="PRK12299.1"/>
    <property type="match status" value="1"/>
</dbReference>
<dbReference type="PANTHER" id="PTHR11702">
    <property type="entry name" value="DEVELOPMENTALLY REGULATED GTP-BINDING PROTEIN-RELATED"/>
    <property type="match status" value="1"/>
</dbReference>
<dbReference type="PANTHER" id="PTHR11702:SF31">
    <property type="entry name" value="MITOCHONDRIAL RIBOSOME-ASSOCIATED GTPASE 2"/>
    <property type="match status" value="1"/>
</dbReference>
<dbReference type="Pfam" id="PF01018">
    <property type="entry name" value="GTP1_OBG"/>
    <property type="match status" value="1"/>
</dbReference>
<dbReference type="Pfam" id="PF01926">
    <property type="entry name" value="MMR_HSR1"/>
    <property type="match status" value="1"/>
</dbReference>
<dbReference type="PIRSF" id="PIRSF002401">
    <property type="entry name" value="GTP_bd_Obg/CgtA"/>
    <property type="match status" value="1"/>
</dbReference>
<dbReference type="PRINTS" id="PR00326">
    <property type="entry name" value="GTP1OBG"/>
</dbReference>
<dbReference type="SUPFAM" id="SSF82051">
    <property type="entry name" value="Obg GTP-binding protein N-terminal domain"/>
    <property type="match status" value="1"/>
</dbReference>
<dbReference type="SUPFAM" id="SSF52540">
    <property type="entry name" value="P-loop containing nucleoside triphosphate hydrolases"/>
    <property type="match status" value="1"/>
</dbReference>
<dbReference type="PROSITE" id="PS51710">
    <property type="entry name" value="G_OBG"/>
    <property type="match status" value="1"/>
</dbReference>
<dbReference type="PROSITE" id="PS00905">
    <property type="entry name" value="GTP1_OBG"/>
    <property type="match status" value="1"/>
</dbReference>
<dbReference type="PROSITE" id="PS51883">
    <property type="entry name" value="OBG"/>
    <property type="match status" value="1"/>
</dbReference>
<name>OBG_YERP3</name>
<evidence type="ECO:0000255" key="1">
    <source>
        <dbReference type="HAMAP-Rule" id="MF_01454"/>
    </source>
</evidence>
<evidence type="ECO:0000255" key="2">
    <source>
        <dbReference type="PROSITE-ProRule" id="PRU01231"/>
    </source>
</evidence>
<evidence type="ECO:0000256" key="3">
    <source>
        <dbReference type="SAM" id="MobiDB-lite"/>
    </source>
</evidence>
<comment type="function">
    <text evidence="1">An essential GTPase which binds GTP, GDP and possibly (p)ppGpp with moderate affinity, with high nucleotide exchange rates and a fairly low GTP hydrolysis rate. Plays a role in control of the cell cycle, stress response, ribosome biogenesis and in those bacteria that undergo differentiation, in morphogenesis control.</text>
</comment>
<comment type="cofactor">
    <cofactor evidence="1">
        <name>Mg(2+)</name>
        <dbReference type="ChEBI" id="CHEBI:18420"/>
    </cofactor>
</comment>
<comment type="subunit">
    <text evidence="1">Monomer.</text>
</comment>
<comment type="subcellular location">
    <subcellularLocation>
        <location evidence="1">Cytoplasm</location>
    </subcellularLocation>
</comment>
<comment type="similarity">
    <text evidence="1">Belongs to the TRAFAC class OBG-HflX-like GTPase superfamily. OBG GTPase family.</text>
</comment>
<reference key="1">
    <citation type="journal article" date="2007" name="PLoS Genet.">
        <title>The complete genome sequence of Yersinia pseudotuberculosis IP31758, the causative agent of Far East scarlet-like fever.</title>
        <authorList>
            <person name="Eppinger M."/>
            <person name="Rosovitz M.J."/>
            <person name="Fricke W.F."/>
            <person name="Rasko D.A."/>
            <person name="Kokorina G."/>
            <person name="Fayolle C."/>
            <person name="Lindler L.E."/>
            <person name="Carniel E."/>
            <person name="Ravel J."/>
        </authorList>
    </citation>
    <scope>NUCLEOTIDE SEQUENCE [LARGE SCALE GENOMIC DNA]</scope>
    <source>
        <strain>IP 31758</strain>
    </source>
</reference>
<organism>
    <name type="scientific">Yersinia pseudotuberculosis serotype O:1b (strain IP 31758)</name>
    <dbReference type="NCBI Taxonomy" id="349747"/>
    <lineage>
        <taxon>Bacteria</taxon>
        <taxon>Pseudomonadati</taxon>
        <taxon>Pseudomonadota</taxon>
        <taxon>Gammaproteobacteria</taxon>
        <taxon>Enterobacterales</taxon>
        <taxon>Yersiniaceae</taxon>
        <taxon>Yersinia</taxon>
    </lineage>
</organism>